<protein>
    <recommendedName>
        <fullName evidence="1">Sulfite reductase [NADPH] hemoprotein beta-component</fullName>
        <shortName evidence="1">SiR-HP</shortName>
        <shortName evidence="1">SiRHP</shortName>
        <ecNumber evidence="1">1.8.1.2</ecNumber>
    </recommendedName>
</protein>
<comment type="function">
    <text evidence="1">Component of the sulfite reductase complex that catalyzes the 6-electron reduction of sulfite to sulfide. This is one of several activities required for the biosynthesis of L-cysteine from sulfate.</text>
</comment>
<comment type="catalytic activity">
    <reaction evidence="1">
        <text>hydrogen sulfide + 3 NADP(+) + 3 H2O = sulfite + 3 NADPH + 4 H(+)</text>
        <dbReference type="Rhea" id="RHEA:13801"/>
        <dbReference type="ChEBI" id="CHEBI:15377"/>
        <dbReference type="ChEBI" id="CHEBI:15378"/>
        <dbReference type="ChEBI" id="CHEBI:17359"/>
        <dbReference type="ChEBI" id="CHEBI:29919"/>
        <dbReference type="ChEBI" id="CHEBI:57783"/>
        <dbReference type="ChEBI" id="CHEBI:58349"/>
        <dbReference type="EC" id="1.8.1.2"/>
    </reaction>
</comment>
<comment type="cofactor">
    <cofactor evidence="1">
        <name>siroheme</name>
        <dbReference type="ChEBI" id="CHEBI:60052"/>
    </cofactor>
    <text evidence="1">Binds 1 siroheme per subunit.</text>
</comment>
<comment type="cofactor">
    <cofactor evidence="1">
        <name>[4Fe-4S] cluster</name>
        <dbReference type="ChEBI" id="CHEBI:49883"/>
    </cofactor>
    <text evidence="1">Binds 1 [4Fe-4S] cluster per subunit.</text>
</comment>
<comment type="pathway">
    <text evidence="1">Sulfur metabolism; hydrogen sulfide biosynthesis; hydrogen sulfide from sulfite (NADPH route): step 1/1.</text>
</comment>
<comment type="subunit">
    <text evidence="1">Alpha(8)-beta(8). The alpha component is a flavoprotein, the beta component is a hemoprotein.</text>
</comment>
<comment type="similarity">
    <text evidence="1">Belongs to the nitrite and sulfite reductase 4Fe-4S domain family.</text>
</comment>
<name>CYSI_KLEP7</name>
<dbReference type="EC" id="1.8.1.2" evidence="1"/>
<dbReference type="EMBL" id="CP000647">
    <property type="protein sequence ID" value="ABR78519.1"/>
    <property type="molecule type" value="Genomic_DNA"/>
</dbReference>
<dbReference type="RefSeq" id="WP_004142787.1">
    <property type="nucleotide sequence ID" value="NC_009648.1"/>
</dbReference>
<dbReference type="SMR" id="A6TD48"/>
<dbReference type="STRING" id="272620.KPN_03118"/>
<dbReference type="PaxDb" id="272620-KPN_03118"/>
<dbReference type="EnsemblBacteria" id="ABR78519">
    <property type="protein sequence ID" value="ABR78519"/>
    <property type="gene ID" value="KPN_03118"/>
</dbReference>
<dbReference type="KEGG" id="kpn:KPN_03118"/>
<dbReference type="HOGENOM" id="CLU_001975_3_2_6"/>
<dbReference type="UniPathway" id="UPA00140">
    <property type="reaction ID" value="UER00207"/>
</dbReference>
<dbReference type="Proteomes" id="UP000000265">
    <property type="component" value="Chromosome"/>
</dbReference>
<dbReference type="GO" id="GO:0009337">
    <property type="term" value="C:sulfite reductase complex (NADPH)"/>
    <property type="evidence" value="ECO:0007669"/>
    <property type="project" value="InterPro"/>
</dbReference>
<dbReference type="GO" id="GO:0051539">
    <property type="term" value="F:4 iron, 4 sulfur cluster binding"/>
    <property type="evidence" value="ECO:0007669"/>
    <property type="project" value="UniProtKB-KW"/>
</dbReference>
<dbReference type="GO" id="GO:0020037">
    <property type="term" value="F:heme binding"/>
    <property type="evidence" value="ECO:0007669"/>
    <property type="project" value="InterPro"/>
</dbReference>
<dbReference type="GO" id="GO:0046872">
    <property type="term" value="F:metal ion binding"/>
    <property type="evidence" value="ECO:0007669"/>
    <property type="project" value="UniProtKB-KW"/>
</dbReference>
<dbReference type="GO" id="GO:0050661">
    <property type="term" value="F:NADP binding"/>
    <property type="evidence" value="ECO:0007669"/>
    <property type="project" value="InterPro"/>
</dbReference>
<dbReference type="GO" id="GO:0050311">
    <property type="term" value="F:sulfite reductase (ferredoxin) activity"/>
    <property type="evidence" value="ECO:0007669"/>
    <property type="project" value="TreeGrafter"/>
</dbReference>
<dbReference type="GO" id="GO:0004783">
    <property type="term" value="F:sulfite reductase (NADPH) activity"/>
    <property type="evidence" value="ECO:0007669"/>
    <property type="project" value="UniProtKB-UniRule"/>
</dbReference>
<dbReference type="GO" id="GO:0019344">
    <property type="term" value="P:cysteine biosynthetic process"/>
    <property type="evidence" value="ECO:0007669"/>
    <property type="project" value="UniProtKB-KW"/>
</dbReference>
<dbReference type="GO" id="GO:0070814">
    <property type="term" value="P:hydrogen sulfide biosynthetic process"/>
    <property type="evidence" value="ECO:0007669"/>
    <property type="project" value="UniProtKB-UniRule"/>
</dbReference>
<dbReference type="GO" id="GO:0000103">
    <property type="term" value="P:sulfate assimilation"/>
    <property type="evidence" value="ECO:0007669"/>
    <property type="project" value="UniProtKB-UniRule"/>
</dbReference>
<dbReference type="FunFam" id="3.30.413.10:FF:000003">
    <property type="entry name" value="Sulfite reductase [NADPH] hemoprotein beta-component"/>
    <property type="match status" value="1"/>
</dbReference>
<dbReference type="FunFam" id="3.30.413.10:FF:000004">
    <property type="entry name" value="Sulfite reductase [NADPH] hemoprotein beta-component"/>
    <property type="match status" value="1"/>
</dbReference>
<dbReference type="Gene3D" id="3.30.413.10">
    <property type="entry name" value="Sulfite Reductase Hemoprotein, domain 1"/>
    <property type="match status" value="2"/>
</dbReference>
<dbReference type="HAMAP" id="MF_01540">
    <property type="entry name" value="CysI"/>
    <property type="match status" value="1"/>
</dbReference>
<dbReference type="InterPro" id="IPR011786">
    <property type="entry name" value="CysI"/>
</dbReference>
<dbReference type="InterPro" id="IPR005117">
    <property type="entry name" value="NiRdtase/SiRdtase_haem-b_fer"/>
</dbReference>
<dbReference type="InterPro" id="IPR036136">
    <property type="entry name" value="Nit/Sulf_reduc_fer-like_dom_sf"/>
</dbReference>
<dbReference type="InterPro" id="IPR006067">
    <property type="entry name" value="NO2/SO3_Rdtase_4Fe4S_dom"/>
</dbReference>
<dbReference type="InterPro" id="IPR045169">
    <property type="entry name" value="NO2/SO3_Rdtase_4Fe4S_prot"/>
</dbReference>
<dbReference type="InterPro" id="IPR045854">
    <property type="entry name" value="NO2/SO3_Rdtase_4Fe4S_sf"/>
</dbReference>
<dbReference type="InterPro" id="IPR006066">
    <property type="entry name" value="NO2/SO3_Rdtase_FeS/sirohaem_BS"/>
</dbReference>
<dbReference type="NCBIfam" id="TIGR02041">
    <property type="entry name" value="CysI"/>
    <property type="match status" value="1"/>
</dbReference>
<dbReference type="NCBIfam" id="NF010029">
    <property type="entry name" value="PRK13504.1"/>
    <property type="match status" value="1"/>
</dbReference>
<dbReference type="PANTHER" id="PTHR11493:SF47">
    <property type="entry name" value="SULFITE REDUCTASE [NADPH] SUBUNIT BETA"/>
    <property type="match status" value="1"/>
</dbReference>
<dbReference type="PANTHER" id="PTHR11493">
    <property type="entry name" value="SULFITE REDUCTASE [NADPH] SUBUNIT BETA-RELATED"/>
    <property type="match status" value="1"/>
</dbReference>
<dbReference type="Pfam" id="PF01077">
    <property type="entry name" value="NIR_SIR"/>
    <property type="match status" value="1"/>
</dbReference>
<dbReference type="Pfam" id="PF03460">
    <property type="entry name" value="NIR_SIR_ferr"/>
    <property type="match status" value="2"/>
</dbReference>
<dbReference type="PRINTS" id="PR00397">
    <property type="entry name" value="SIROHAEM"/>
</dbReference>
<dbReference type="SUPFAM" id="SSF56014">
    <property type="entry name" value="Nitrite and sulphite reductase 4Fe-4S domain-like"/>
    <property type="match status" value="2"/>
</dbReference>
<dbReference type="SUPFAM" id="SSF55124">
    <property type="entry name" value="Nitrite/Sulfite reductase N-terminal domain-like"/>
    <property type="match status" value="2"/>
</dbReference>
<dbReference type="PROSITE" id="PS00365">
    <property type="entry name" value="NIR_SIR"/>
    <property type="match status" value="1"/>
</dbReference>
<feature type="chain" id="PRO_1000068765" description="Sulfite reductase [NADPH] hemoprotein beta-component">
    <location>
        <begin position="1"/>
        <end position="570"/>
    </location>
</feature>
<feature type="binding site" evidence="1">
    <location>
        <position position="434"/>
    </location>
    <ligand>
        <name>[4Fe-4S] cluster</name>
        <dbReference type="ChEBI" id="CHEBI:49883"/>
    </ligand>
</feature>
<feature type="binding site" evidence="1">
    <location>
        <position position="440"/>
    </location>
    <ligand>
        <name>[4Fe-4S] cluster</name>
        <dbReference type="ChEBI" id="CHEBI:49883"/>
    </ligand>
</feature>
<feature type="binding site" evidence="1">
    <location>
        <position position="479"/>
    </location>
    <ligand>
        <name>[4Fe-4S] cluster</name>
        <dbReference type="ChEBI" id="CHEBI:49883"/>
    </ligand>
</feature>
<feature type="binding site" evidence="1">
    <location>
        <position position="483"/>
    </location>
    <ligand>
        <name>[4Fe-4S] cluster</name>
        <dbReference type="ChEBI" id="CHEBI:49883"/>
    </ligand>
</feature>
<feature type="binding site" description="axial binding residue" evidence="1">
    <location>
        <position position="483"/>
    </location>
    <ligand>
        <name>siroheme</name>
        <dbReference type="ChEBI" id="CHEBI:60052"/>
    </ligand>
    <ligandPart>
        <name>Fe</name>
        <dbReference type="ChEBI" id="CHEBI:18248"/>
    </ligandPart>
</feature>
<reference key="1">
    <citation type="submission" date="2006-09" db="EMBL/GenBank/DDBJ databases">
        <authorList>
            <consortium name="The Klebsiella pneumonia Genome Sequencing Project"/>
            <person name="McClelland M."/>
            <person name="Sanderson E.K."/>
            <person name="Spieth J."/>
            <person name="Clifton W.S."/>
            <person name="Latreille P."/>
            <person name="Sabo A."/>
            <person name="Pepin K."/>
            <person name="Bhonagiri V."/>
            <person name="Porwollik S."/>
            <person name="Ali J."/>
            <person name="Wilson R.K."/>
        </authorList>
    </citation>
    <scope>NUCLEOTIDE SEQUENCE [LARGE SCALE GENOMIC DNA]</scope>
    <source>
        <strain>ATCC 700721 / MGH 78578</strain>
    </source>
</reference>
<organism>
    <name type="scientific">Klebsiella pneumoniae subsp. pneumoniae (strain ATCC 700721 / MGH 78578)</name>
    <dbReference type="NCBI Taxonomy" id="272620"/>
    <lineage>
        <taxon>Bacteria</taxon>
        <taxon>Pseudomonadati</taxon>
        <taxon>Pseudomonadota</taxon>
        <taxon>Gammaproteobacteria</taxon>
        <taxon>Enterobacterales</taxon>
        <taxon>Enterobacteriaceae</taxon>
        <taxon>Klebsiella/Raoultella group</taxon>
        <taxon>Klebsiella</taxon>
        <taxon>Klebsiella pneumoniae complex</taxon>
    </lineage>
</organism>
<accession>A6TD48</accession>
<evidence type="ECO:0000255" key="1">
    <source>
        <dbReference type="HAMAP-Rule" id="MF_01540"/>
    </source>
</evidence>
<keyword id="KW-0004">4Fe-4S</keyword>
<keyword id="KW-0028">Amino-acid biosynthesis</keyword>
<keyword id="KW-0198">Cysteine biosynthesis</keyword>
<keyword id="KW-0349">Heme</keyword>
<keyword id="KW-0408">Iron</keyword>
<keyword id="KW-0411">Iron-sulfur</keyword>
<keyword id="KW-0479">Metal-binding</keyword>
<keyword id="KW-0521">NADP</keyword>
<keyword id="KW-0560">Oxidoreductase</keyword>
<sequence>MSEKHPGPLVVEGKLSDAERMKLESNYLRGTIAEDLNDGLTGGFKGDNFLLIRFHGMYQQDDRDIRAERAAQKLEPRHAMLLRCRLPGGVITTTQWKAIDKFAAENTIYGSIRLTNRQTFQFHGILKKNVKPVHQMLHSVGLDALATANDMNRNVLCTSNPYESQLHAEAYEWAKKISEHLLPRTRAYAEIWLDQKKVATTDEEPILGQTYLPRKFKTTVVIPPQNDIDLHANDMNFVAIAENGKLVGFNLLVGGGLSIEHGNKKTYARTASEFGYLPLEHTLAVAEAVVTTQRDWGNRTDRKNAKTKYTLERVGVETFKAEVERRAGIKFEPIRPYEFTGRGDRIGWVKGIDDKWHLTLFIENGRILDYPGRPLKTGLLEIAKVHQGEFRITANQNLIVASVPEDQKARIEKLARDHGLMNAVTPQRENSMACVSFPTCPLAMAEAERFLPSFIDKVEGVMSKHGVSDEHIVTRVTGCPNGCGRAMLAEVGLVGKAPGRYNLHIGGNRNGTRIPRMYRENITESEILDSLDELVGRWAKEREAGEGFGDFTVRAGIIRPVLDPARDFWE</sequence>
<proteinExistence type="inferred from homology"/>
<gene>
    <name evidence="1" type="primary">cysI</name>
    <name type="ordered locus">KPN78578_30580</name>
    <name type="ORF">KPN_03118</name>
</gene>